<reference key="1">
    <citation type="journal article" date="2010" name="J. Proteome Res.">
        <title>Molecular diversification of peptide toxins from the tarantula Haplopelma hainanum (Ornithoctonus hainana) venom based on transcriptomic, peptidomic, and genomic analyses.</title>
        <authorList>
            <person name="Tang X."/>
            <person name="Zhang Y."/>
            <person name="Hu W."/>
            <person name="Xu D."/>
            <person name="Tao H."/>
            <person name="Yang X."/>
            <person name="Li Y."/>
            <person name="Jiang L."/>
            <person name="Liang S."/>
        </authorList>
    </citation>
    <scope>PROTEIN SEQUENCE</scope>
    <scope>IDENTIFICATION BY MASS SPECTROMETRY</scope>
    <source>
        <tissue>Venom</tissue>
    </source>
</reference>
<accession>P0CH74</accession>
<organism>
    <name type="scientific">Cyriopagopus hainanus</name>
    <name type="common">Chinese bird spider</name>
    <name type="synonym">Haplopelma hainanum</name>
    <dbReference type="NCBI Taxonomy" id="209901"/>
    <lineage>
        <taxon>Eukaryota</taxon>
        <taxon>Metazoa</taxon>
        <taxon>Ecdysozoa</taxon>
        <taxon>Arthropoda</taxon>
        <taxon>Chelicerata</taxon>
        <taxon>Arachnida</taxon>
        <taxon>Araneae</taxon>
        <taxon>Mygalomorphae</taxon>
        <taxon>Theraphosidae</taxon>
        <taxon>Haplopelma</taxon>
    </lineage>
</organism>
<comment type="subcellular location">
    <subcellularLocation>
        <location evidence="1">Secreted</location>
    </subcellularLocation>
</comment>
<comment type="tissue specificity">
    <text>Expressed by the venom gland.</text>
</comment>
<comment type="similarity">
    <text evidence="4">Belongs to the AVIT (prokineticin) family.</text>
</comment>
<evidence type="ECO:0000250" key="1"/>
<evidence type="ECO:0000250" key="2">
    <source>
        <dbReference type="UniProtKB" id="Q9PW66"/>
    </source>
</evidence>
<evidence type="ECO:0000303" key="3">
    <source>
    </source>
</evidence>
<evidence type="ECO:0000305" key="4"/>
<proteinExistence type="evidence at protein level"/>
<dbReference type="SMR" id="P0CH74"/>
<dbReference type="GO" id="GO:0005576">
    <property type="term" value="C:extracellular region"/>
    <property type="evidence" value="ECO:0007669"/>
    <property type="project" value="UniProtKB-SubCell"/>
</dbReference>
<dbReference type="GO" id="GO:0090729">
    <property type="term" value="F:toxin activity"/>
    <property type="evidence" value="ECO:0007669"/>
    <property type="project" value="UniProtKB-KW"/>
</dbReference>
<feature type="peptide" id="PRO_0000400856" description="Hainantoxin F6-34.84">
    <location>
        <begin position="1"/>
        <end position="30" status="greater than"/>
    </location>
</feature>
<feature type="disulfide bond" evidence="2">
    <location>
        <begin position="2"/>
        <end position="15"/>
    </location>
</feature>
<feature type="disulfide bond" evidence="2">
    <location>
        <begin position="9"/>
        <end position="24"/>
    </location>
</feature>
<feature type="non-terminal residue">
    <location>
        <position position="30"/>
    </location>
</feature>
<name>HN634_CYRHA</name>
<sequence length="30" mass="3211">ECWSQAADCSDGHCCAGRSFSKNCRPYGGD</sequence>
<keyword id="KW-0903">Direct protein sequencing</keyword>
<keyword id="KW-1015">Disulfide bond</keyword>
<keyword id="KW-0964">Secreted</keyword>
<keyword id="KW-0800">Toxin</keyword>
<protein>
    <recommendedName>
        <fullName evidence="3">Hainantoxin F6-34.84</fullName>
    </recommendedName>
    <alternativeName>
        <fullName evidence="3">Peptide F6-34.84</fullName>
    </alternativeName>
</protein>